<accession>Q9JVE0</accession>
<accession>A1IQT0</accession>
<dbReference type="EC" id="4.2.1.20" evidence="1"/>
<dbReference type="EMBL" id="AL157959">
    <property type="protein sequence ID" value="CAM08114.1"/>
    <property type="molecule type" value="Genomic_DNA"/>
</dbReference>
<dbReference type="PIR" id="B81934">
    <property type="entry name" value="B81934"/>
</dbReference>
<dbReference type="RefSeq" id="WP_002227527.1">
    <property type="nucleotide sequence ID" value="NC_003116.1"/>
</dbReference>
<dbReference type="SMR" id="Q9JVE0"/>
<dbReference type="EnsemblBacteria" id="CAM08114">
    <property type="protein sequence ID" value="CAM08114"/>
    <property type="gene ID" value="NMA0879"/>
</dbReference>
<dbReference type="GeneID" id="93386497"/>
<dbReference type="KEGG" id="nma:NMA0879"/>
<dbReference type="HOGENOM" id="CLU_016734_0_0_4"/>
<dbReference type="UniPathway" id="UPA00035">
    <property type="reaction ID" value="UER00044"/>
</dbReference>
<dbReference type="Proteomes" id="UP000000626">
    <property type="component" value="Chromosome"/>
</dbReference>
<dbReference type="GO" id="GO:0005829">
    <property type="term" value="C:cytosol"/>
    <property type="evidence" value="ECO:0007669"/>
    <property type="project" value="TreeGrafter"/>
</dbReference>
<dbReference type="GO" id="GO:0004834">
    <property type="term" value="F:tryptophan synthase activity"/>
    <property type="evidence" value="ECO:0007669"/>
    <property type="project" value="UniProtKB-UniRule"/>
</dbReference>
<dbReference type="CDD" id="cd04724">
    <property type="entry name" value="Tryptophan_synthase_alpha"/>
    <property type="match status" value="1"/>
</dbReference>
<dbReference type="FunFam" id="3.20.20.70:FF:000037">
    <property type="entry name" value="Tryptophan synthase alpha chain"/>
    <property type="match status" value="1"/>
</dbReference>
<dbReference type="Gene3D" id="3.20.20.70">
    <property type="entry name" value="Aldolase class I"/>
    <property type="match status" value="1"/>
</dbReference>
<dbReference type="HAMAP" id="MF_00131">
    <property type="entry name" value="Trp_synth_alpha"/>
    <property type="match status" value="1"/>
</dbReference>
<dbReference type="InterPro" id="IPR013785">
    <property type="entry name" value="Aldolase_TIM"/>
</dbReference>
<dbReference type="InterPro" id="IPR011060">
    <property type="entry name" value="RibuloseP-bd_barrel"/>
</dbReference>
<dbReference type="InterPro" id="IPR018204">
    <property type="entry name" value="Trp_synthase_alpha_AS"/>
</dbReference>
<dbReference type="InterPro" id="IPR002028">
    <property type="entry name" value="Trp_synthase_suA"/>
</dbReference>
<dbReference type="NCBIfam" id="TIGR00262">
    <property type="entry name" value="trpA"/>
    <property type="match status" value="1"/>
</dbReference>
<dbReference type="PANTHER" id="PTHR43406:SF1">
    <property type="entry name" value="TRYPTOPHAN SYNTHASE ALPHA CHAIN, CHLOROPLASTIC"/>
    <property type="match status" value="1"/>
</dbReference>
<dbReference type="PANTHER" id="PTHR43406">
    <property type="entry name" value="TRYPTOPHAN SYNTHASE, ALPHA CHAIN"/>
    <property type="match status" value="1"/>
</dbReference>
<dbReference type="Pfam" id="PF00290">
    <property type="entry name" value="Trp_syntA"/>
    <property type="match status" value="1"/>
</dbReference>
<dbReference type="SUPFAM" id="SSF51366">
    <property type="entry name" value="Ribulose-phoshate binding barrel"/>
    <property type="match status" value="1"/>
</dbReference>
<dbReference type="PROSITE" id="PS00167">
    <property type="entry name" value="TRP_SYNTHASE_ALPHA"/>
    <property type="match status" value="1"/>
</dbReference>
<feature type="chain" id="PRO_0000098814" description="Tryptophan synthase alpha chain">
    <location>
        <begin position="1"/>
        <end position="261"/>
    </location>
</feature>
<feature type="active site" description="Proton acceptor" evidence="1">
    <location>
        <position position="47"/>
    </location>
</feature>
<feature type="active site" description="Proton acceptor" evidence="1">
    <location>
        <position position="58"/>
    </location>
</feature>
<comment type="function">
    <text evidence="1">The alpha subunit is responsible for the aldol cleavage of indoleglycerol phosphate to indole and glyceraldehyde 3-phosphate.</text>
</comment>
<comment type="catalytic activity">
    <reaction evidence="1">
        <text>(1S,2R)-1-C-(indol-3-yl)glycerol 3-phosphate + L-serine = D-glyceraldehyde 3-phosphate + L-tryptophan + H2O</text>
        <dbReference type="Rhea" id="RHEA:10532"/>
        <dbReference type="ChEBI" id="CHEBI:15377"/>
        <dbReference type="ChEBI" id="CHEBI:33384"/>
        <dbReference type="ChEBI" id="CHEBI:57912"/>
        <dbReference type="ChEBI" id="CHEBI:58866"/>
        <dbReference type="ChEBI" id="CHEBI:59776"/>
        <dbReference type="EC" id="4.2.1.20"/>
    </reaction>
</comment>
<comment type="pathway">
    <text evidence="1">Amino-acid biosynthesis; L-tryptophan biosynthesis; L-tryptophan from chorismate: step 5/5.</text>
</comment>
<comment type="subunit">
    <text evidence="1">Tetramer of two alpha and two beta chains.</text>
</comment>
<comment type="similarity">
    <text evidence="1">Belongs to the TrpA family.</text>
</comment>
<keyword id="KW-0028">Amino-acid biosynthesis</keyword>
<keyword id="KW-0057">Aromatic amino acid biosynthesis</keyword>
<keyword id="KW-0456">Lyase</keyword>
<keyword id="KW-0822">Tryptophan biosynthesis</keyword>
<reference key="1">
    <citation type="journal article" date="2000" name="Nature">
        <title>Complete DNA sequence of a serogroup A strain of Neisseria meningitidis Z2491.</title>
        <authorList>
            <person name="Parkhill J."/>
            <person name="Achtman M."/>
            <person name="James K.D."/>
            <person name="Bentley S.D."/>
            <person name="Churcher C.M."/>
            <person name="Klee S.R."/>
            <person name="Morelli G."/>
            <person name="Basham D."/>
            <person name="Brown D."/>
            <person name="Chillingworth T."/>
            <person name="Davies R.M."/>
            <person name="Davis P."/>
            <person name="Devlin K."/>
            <person name="Feltwell T."/>
            <person name="Hamlin N."/>
            <person name="Holroyd S."/>
            <person name="Jagels K."/>
            <person name="Leather S."/>
            <person name="Moule S."/>
            <person name="Mungall K.L."/>
            <person name="Quail M.A."/>
            <person name="Rajandream M.A."/>
            <person name="Rutherford K.M."/>
            <person name="Simmonds M."/>
            <person name="Skelton J."/>
            <person name="Whitehead S."/>
            <person name="Spratt B.G."/>
            <person name="Barrell B.G."/>
        </authorList>
    </citation>
    <scope>NUCLEOTIDE SEQUENCE [LARGE SCALE GENOMIC DNA]</scope>
    <source>
        <strain>DSM 15465 / Z2491</strain>
    </source>
</reference>
<gene>
    <name evidence="1" type="primary">trpA</name>
    <name type="ordered locus">NMA0879</name>
</gene>
<proteinExistence type="inferred from homology"/>
<sequence>MSRIRQAFAALDGGKALIPYITVGDPDIRTTLALMHGMVANGADILELGVPFSDPMADGPVIQRAAERALANGISLRDVLDVVRKFRETDTQTPVVLMGYLNPVHKMGYREFAQEAAKAGVDGVLTVDSPVETIDPLYRELKDNGVDCIFLIAPTTTEDRIKTIAELAGGFVYYVSLKGVTGAASLDTDEVSRKIEYLHQYIDIPIGVGFGISNAESARKIGRVAEAVIVGSRIVKEIENNAGNEAAVVGALVKELKDAVR</sequence>
<evidence type="ECO:0000255" key="1">
    <source>
        <dbReference type="HAMAP-Rule" id="MF_00131"/>
    </source>
</evidence>
<name>TRPA_NEIMA</name>
<organism>
    <name type="scientific">Neisseria meningitidis serogroup A / serotype 4A (strain DSM 15465 / Z2491)</name>
    <dbReference type="NCBI Taxonomy" id="122587"/>
    <lineage>
        <taxon>Bacteria</taxon>
        <taxon>Pseudomonadati</taxon>
        <taxon>Pseudomonadota</taxon>
        <taxon>Betaproteobacteria</taxon>
        <taxon>Neisseriales</taxon>
        <taxon>Neisseriaceae</taxon>
        <taxon>Neisseria</taxon>
    </lineage>
</organism>
<protein>
    <recommendedName>
        <fullName evidence="1">Tryptophan synthase alpha chain</fullName>
        <ecNumber evidence="1">4.2.1.20</ecNumber>
    </recommendedName>
</protein>